<sequence>MAKSILFSEDARKKMQEGVDKLANTVKVTLGPKGRNVVLDKKFGSPLITNDGVTIAKEIELEEPYENMGAQLVKEVATKTNDVAGDGTTTATLLAQAIIREGLKNVTAGANPMLIRQGIKIAVDKAVEEIKKVSRTVNGKEDIARIAAISASDEEIGKLIADAMEKVGNEGVITVEESKTMGTELDVVEGMEFDRGYLSAYMVTDTEKMEAVLDDPYILITDKKISTIQDILPLLEKMVQQGKKLLIIAEDVEGEALTTLVVNKLRGTFTCVAVKAPGFGDRRKEMLQDIAILTDGKVISEELGRDLKEVSLEDLGRAESVKIDKENTTIVNGRGDKKSIQDRVSQIKAQIEETTSEFDKEKLQERLAKLSGGVAVIKVGAATETELKEKKMRIEDALAATKAGVEEGMGPGGGTAYVNAIPEVSKLTSDVADVKVGIDIITKALEEPVRQIAANAGVEGSVIIEKVKNSEPGVGYDVLTDKYVNMIDNGIVDPTKVTRSALQNAASVAATFLTTEAAVVDIPDKNNAAGLPGAPGMGGMDGMY</sequence>
<name>CH60_CLOK5</name>
<feature type="chain" id="PRO_1000082468" description="Chaperonin GroEL">
    <location>
        <begin position="1"/>
        <end position="544"/>
    </location>
</feature>
<feature type="binding site" evidence="1">
    <location>
        <begin position="29"/>
        <end position="32"/>
    </location>
    <ligand>
        <name>ATP</name>
        <dbReference type="ChEBI" id="CHEBI:30616"/>
    </ligand>
</feature>
<feature type="binding site" evidence="1">
    <location>
        <begin position="86"/>
        <end position="90"/>
    </location>
    <ligand>
        <name>ATP</name>
        <dbReference type="ChEBI" id="CHEBI:30616"/>
    </ligand>
</feature>
<feature type="binding site" evidence="1">
    <location>
        <position position="413"/>
    </location>
    <ligand>
        <name>ATP</name>
        <dbReference type="ChEBI" id="CHEBI:30616"/>
    </ligand>
</feature>
<feature type="binding site" evidence="1">
    <location>
        <begin position="477"/>
        <end position="479"/>
    </location>
    <ligand>
        <name>ATP</name>
        <dbReference type="ChEBI" id="CHEBI:30616"/>
    </ligand>
</feature>
<feature type="binding site" evidence="1">
    <location>
        <position position="493"/>
    </location>
    <ligand>
        <name>ATP</name>
        <dbReference type="ChEBI" id="CHEBI:30616"/>
    </ligand>
</feature>
<evidence type="ECO:0000255" key="1">
    <source>
        <dbReference type="HAMAP-Rule" id="MF_00600"/>
    </source>
</evidence>
<accession>A5N5D7</accession>
<protein>
    <recommendedName>
        <fullName evidence="1">Chaperonin GroEL</fullName>
        <ecNumber evidence="1">5.6.1.7</ecNumber>
    </recommendedName>
    <alternativeName>
        <fullName evidence="1">60 kDa chaperonin</fullName>
    </alternativeName>
    <alternativeName>
        <fullName evidence="1">Chaperonin-60</fullName>
        <shortName evidence="1">Cpn60</shortName>
    </alternativeName>
</protein>
<keyword id="KW-0067">ATP-binding</keyword>
<keyword id="KW-0143">Chaperone</keyword>
<keyword id="KW-0963">Cytoplasm</keyword>
<keyword id="KW-0413">Isomerase</keyword>
<keyword id="KW-0547">Nucleotide-binding</keyword>
<keyword id="KW-1185">Reference proteome</keyword>
<proteinExistence type="inferred from homology"/>
<dbReference type="EC" id="5.6.1.7" evidence="1"/>
<dbReference type="EMBL" id="CP000673">
    <property type="protein sequence ID" value="EDK32518.1"/>
    <property type="molecule type" value="Genomic_DNA"/>
</dbReference>
<dbReference type="RefSeq" id="WP_011989033.1">
    <property type="nucleotide sequence ID" value="NC_009706.1"/>
</dbReference>
<dbReference type="SMR" id="A5N5D7"/>
<dbReference type="STRING" id="431943.CKL_0464"/>
<dbReference type="KEGG" id="ckl:CKL_0464"/>
<dbReference type="eggNOG" id="COG0459">
    <property type="taxonomic scope" value="Bacteria"/>
</dbReference>
<dbReference type="HOGENOM" id="CLU_016503_3_0_9"/>
<dbReference type="Proteomes" id="UP000002411">
    <property type="component" value="Chromosome"/>
</dbReference>
<dbReference type="GO" id="GO:0005737">
    <property type="term" value="C:cytoplasm"/>
    <property type="evidence" value="ECO:0007669"/>
    <property type="project" value="UniProtKB-SubCell"/>
</dbReference>
<dbReference type="GO" id="GO:0005524">
    <property type="term" value="F:ATP binding"/>
    <property type="evidence" value="ECO:0007669"/>
    <property type="project" value="UniProtKB-UniRule"/>
</dbReference>
<dbReference type="GO" id="GO:0140662">
    <property type="term" value="F:ATP-dependent protein folding chaperone"/>
    <property type="evidence" value="ECO:0007669"/>
    <property type="project" value="InterPro"/>
</dbReference>
<dbReference type="GO" id="GO:0016853">
    <property type="term" value="F:isomerase activity"/>
    <property type="evidence" value="ECO:0007669"/>
    <property type="project" value="UniProtKB-KW"/>
</dbReference>
<dbReference type="GO" id="GO:0051082">
    <property type="term" value="F:unfolded protein binding"/>
    <property type="evidence" value="ECO:0007669"/>
    <property type="project" value="UniProtKB-UniRule"/>
</dbReference>
<dbReference type="GO" id="GO:0042026">
    <property type="term" value="P:protein refolding"/>
    <property type="evidence" value="ECO:0007669"/>
    <property type="project" value="UniProtKB-UniRule"/>
</dbReference>
<dbReference type="CDD" id="cd03344">
    <property type="entry name" value="GroEL"/>
    <property type="match status" value="1"/>
</dbReference>
<dbReference type="FunFam" id="1.10.560.10:FF:000001">
    <property type="entry name" value="60 kDa chaperonin"/>
    <property type="match status" value="1"/>
</dbReference>
<dbReference type="FunFam" id="3.50.7.10:FF:000001">
    <property type="entry name" value="60 kDa chaperonin"/>
    <property type="match status" value="1"/>
</dbReference>
<dbReference type="Gene3D" id="3.50.7.10">
    <property type="entry name" value="GroEL"/>
    <property type="match status" value="1"/>
</dbReference>
<dbReference type="Gene3D" id="1.10.560.10">
    <property type="entry name" value="GroEL-like equatorial domain"/>
    <property type="match status" value="1"/>
</dbReference>
<dbReference type="Gene3D" id="3.30.260.10">
    <property type="entry name" value="TCP-1-like chaperonin intermediate domain"/>
    <property type="match status" value="1"/>
</dbReference>
<dbReference type="HAMAP" id="MF_00600">
    <property type="entry name" value="CH60"/>
    <property type="match status" value="1"/>
</dbReference>
<dbReference type="InterPro" id="IPR001844">
    <property type="entry name" value="Cpn60/GroEL"/>
</dbReference>
<dbReference type="InterPro" id="IPR002423">
    <property type="entry name" value="Cpn60/GroEL/TCP-1"/>
</dbReference>
<dbReference type="InterPro" id="IPR027409">
    <property type="entry name" value="GroEL-like_apical_dom_sf"/>
</dbReference>
<dbReference type="InterPro" id="IPR027413">
    <property type="entry name" value="GROEL-like_equatorial_sf"/>
</dbReference>
<dbReference type="InterPro" id="IPR027410">
    <property type="entry name" value="TCP-1-like_intermed_sf"/>
</dbReference>
<dbReference type="NCBIfam" id="TIGR02348">
    <property type="entry name" value="GroEL"/>
    <property type="match status" value="1"/>
</dbReference>
<dbReference type="NCBIfam" id="NF000592">
    <property type="entry name" value="PRK00013.1"/>
    <property type="match status" value="1"/>
</dbReference>
<dbReference type="NCBIfam" id="NF009487">
    <property type="entry name" value="PRK12849.1"/>
    <property type="match status" value="1"/>
</dbReference>
<dbReference type="NCBIfam" id="NF009488">
    <property type="entry name" value="PRK12850.1"/>
    <property type="match status" value="1"/>
</dbReference>
<dbReference type="NCBIfam" id="NF009489">
    <property type="entry name" value="PRK12851.1"/>
    <property type="match status" value="1"/>
</dbReference>
<dbReference type="PANTHER" id="PTHR45633">
    <property type="entry name" value="60 KDA HEAT SHOCK PROTEIN, MITOCHONDRIAL"/>
    <property type="match status" value="1"/>
</dbReference>
<dbReference type="Pfam" id="PF00118">
    <property type="entry name" value="Cpn60_TCP1"/>
    <property type="match status" value="1"/>
</dbReference>
<dbReference type="PRINTS" id="PR00298">
    <property type="entry name" value="CHAPERONIN60"/>
</dbReference>
<dbReference type="SUPFAM" id="SSF52029">
    <property type="entry name" value="GroEL apical domain-like"/>
    <property type="match status" value="1"/>
</dbReference>
<dbReference type="SUPFAM" id="SSF48592">
    <property type="entry name" value="GroEL equatorial domain-like"/>
    <property type="match status" value="1"/>
</dbReference>
<dbReference type="SUPFAM" id="SSF54849">
    <property type="entry name" value="GroEL-intermediate domain like"/>
    <property type="match status" value="1"/>
</dbReference>
<reference key="1">
    <citation type="journal article" date="2008" name="Proc. Natl. Acad. Sci. U.S.A.">
        <title>The genome of Clostridium kluyveri, a strict anaerobe with unique metabolic features.</title>
        <authorList>
            <person name="Seedorf H."/>
            <person name="Fricke W.F."/>
            <person name="Veith B."/>
            <person name="Brueggemann H."/>
            <person name="Liesegang H."/>
            <person name="Strittmatter A."/>
            <person name="Miethke M."/>
            <person name="Buckel W."/>
            <person name="Hinderberger J."/>
            <person name="Li F."/>
            <person name="Hagemeier C."/>
            <person name="Thauer R.K."/>
            <person name="Gottschalk G."/>
        </authorList>
    </citation>
    <scope>NUCLEOTIDE SEQUENCE [LARGE SCALE GENOMIC DNA]</scope>
    <source>
        <strain>ATCC 8527 / DSM 555 / NBRC 12016 / NCIMB 10680 / K1</strain>
    </source>
</reference>
<comment type="function">
    <text evidence="1">Together with its co-chaperonin GroES, plays an essential role in assisting protein folding. The GroEL-GroES system forms a nano-cage that allows encapsulation of the non-native substrate proteins and provides a physical environment optimized to promote and accelerate protein folding.</text>
</comment>
<comment type="catalytic activity">
    <reaction evidence="1">
        <text>ATP + H2O + a folded polypeptide = ADP + phosphate + an unfolded polypeptide.</text>
        <dbReference type="EC" id="5.6.1.7"/>
    </reaction>
</comment>
<comment type="subunit">
    <text evidence="1">Forms a cylinder of 14 subunits composed of two heptameric rings stacked back-to-back. Interacts with the co-chaperonin GroES.</text>
</comment>
<comment type="subcellular location">
    <subcellularLocation>
        <location evidence="1">Cytoplasm</location>
    </subcellularLocation>
</comment>
<comment type="similarity">
    <text evidence="1">Belongs to the chaperonin (HSP60) family.</text>
</comment>
<gene>
    <name evidence="1" type="primary">groEL</name>
    <name evidence="1" type="synonym">groL</name>
    <name type="ordered locus">CKL_0464</name>
</gene>
<organism>
    <name type="scientific">Clostridium kluyveri (strain ATCC 8527 / DSM 555 / NBRC 12016 / NCIMB 10680 / K1)</name>
    <dbReference type="NCBI Taxonomy" id="431943"/>
    <lineage>
        <taxon>Bacteria</taxon>
        <taxon>Bacillati</taxon>
        <taxon>Bacillota</taxon>
        <taxon>Clostridia</taxon>
        <taxon>Eubacteriales</taxon>
        <taxon>Clostridiaceae</taxon>
        <taxon>Clostridium</taxon>
    </lineage>
</organism>